<gene>
    <name evidence="1" type="primary">rpsS</name>
    <name type="ordered locus">LBJ_2655</name>
</gene>
<comment type="function">
    <text evidence="1">Protein S19 forms a complex with S13 that binds strongly to the 16S ribosomal RNA.</text>
</comment>
<comment type="similarity">
    <text evidence="1">Belongs to the universal ribosomal protein uS19 family.</text>
</comment>
<protein>
    <recommendedName>
        <fullName evidence="1">Small ribosomal subunit protein uS19</fullName>
    </recommendedName>
    <alternativeName>
        <fullName evidence="2">30S ribosomal protein S19</fullName>
    </alternativeName>
</protein>
<accession>Q04PU2</accession>
<proteinExistence type="inferred from homology"/>
<sequence length="93" mass="10654">MARSVKKGPFIDDHLMKKITKLNSENQKKPFKTWSRRSTIFPDMVGHTVMVHNGKQFTPVYINENMIGHKLGEFSPTRTFRGHVAGDKKAAKK</sequence>
<feature type="chain" id="PRO_1000051069" description="Small ribosomal subunit protein uS19">
    <location>
        <begin position="1"/>
        <end position="93"/>
    </location>
</feature>
<reference key="1">
    <citation type="journal article" date="2006" name="Proc. Natl. Acad. Sci. U.S.A.">
        <title>Genome reduction in Leptospira borgpetersenii reflects limited transmission potential.</title>
        <authorList>
            <person name="Bulach D.M."/>
            <person name="Zuerner R.L."/>
            <person name="Wilson P."/>
            <person name="Seemann T."/>
            <person name="McGrath A."/>
            <person name="Cullen P.A."/>
            <person name="Davis J."/>
            <person name="Johnson M."/>
            <person name="Kuczek E."/>
            <person name="Alt D.P."/>
            <person name="Peterson-Burch B."/>
            <person name="Coppel R.L."/>
            <person name="Rood J.I."/>
            <person name="Davies J.K."/>
            <person name="Adler B."/>
        </authorList>
    </citation>
    <scope>NUCLEOTIDE SEQUENCE [LARGE SCALE GENOMIC DNA]</scope>
    <source>
        <strain>JB197</strain>
    </source>
</reference>
<name>RS19_LEPBJ</name>
<organism>
    <name type="scientific">Leptospira borgpetersenii serovar Hardjo-bovis (strain JB197)</name>
    <dbReference type="NCBI Taxonomy" id="355277"/>
    <lineage>
        <taxon>Bacteria</taxon>
        <taxon>Pseudomonadati</taxon>
        <taxon>Spirochaetota</taxon>
        <taxon>Spirochaetia</taxon>
        <taxon>Leptospirales</taxon>
        <taxon>Leptospiraceae</taxon>
        <taxon>Leptospira</taxon>
    </lineage>
</organism>
<evidence type="ECO:0000255" key="1">
    <source>
        <dbReference type="HAMAP-Rule" id="MF_00531"/>
    </source>
</evidence>
<evidence type="ECO:0000305" key="2"/>
<dbReference type="EMBL" id="CP000350">
    <property type="protein sequence ID" value="ABJ77078.1"/>
    <property type="molecule type" value="Genomic_DNA"/>
</dbReference>
<dbReference type="RefSeq" id="WP_000124500.1">
    <property type="nucleotide sequence ID" value="NC_008510.1"/>
</dbReference>
<dbReference type="SMR" id="Q04PU2"/>
<dbReference type="GeneID" id="61172954"/>
<dbReference type="KEGG" id="lbj:LBJ_2655"/>
<dbReference type="HOGENOM" id="CLU_144911_0_1_12"/>
<dbReference type="Proteomes" id="UP000000656">
    <property type="component" value="Chromosome 1"/>
</dbReference>
<dbReference type="GO" id="GO:0005737">
    <property type="term" value="C:cytoplasm"/>
    <property type="evidence" value="ECO:0007669"/>
    <property type="project" value="UniProtKB-ARBA"/>
</dbReference>
<dbReference type="GO" id="GO:0015935">
    <property type="term" value="C:small ribosomal subunit"/>
    <property type="evidence" value="ECO:0007669"/>
    <property type="project" value="InterPro"/>
</dbReference>
<dbReference type="GO" id="GO:0019843">
    <property type="term" value="F:rRNA binding"/>
    <property type="evidence" value="ECO:0007669"/>
    <property type="project" value="UniProtKB-UniRule"/>
</dbReference>
<dbReference type="GO" id="GO:0003735">
    <property type="term" value="F:structural constituent of ribosome"/>
    <property type="evidence" value="ECO:0007669"/>
    <property type="project" value="InterPro"/>
</dbReference>
<dbReference type="GO" id="GO:0000028">
    <property type="term" value="P:ribosomal small subunit assembly"/>
    <property type="evidence" value="ECO:0007669"/>
    <property type="project" value="TreeGrafter"/>
</dbReference>
<dbReference type="GO" id="GO:0006412">
    <property type="term" value="P:translation"/>
    <property type="evidence" value="ECO:0007669"/>
    <property type="project" value="UniProtKB-UniRule"/>
</dbReference>
<dbReference type="FunFam" id="3.30.860.10:FF:000001">
    <property type="entry name" value="30S ribosomal protein S19"/>
    <property type="match status" value="1"/>
</dbReference>
<dbReference type="Gene3D" id="3.30.860.10">
    <property type="entry name" value="30s Ribosomal Protein S19, Chain A"/>
    <property type="match status" value="1"/>
</dbReference>
<dbReference type="HAMAP" id="MF_00531">
    <property type="entry name" value="Ribosomal_uS19"/>
    <property type="match status" value="1"/>
</dbReference>
<dbReference type="InterPro" id="IPR002222">
    <property type="entry name" value="Ribosomal_uS19"/>
</dbReference>
<dbReference type="InterPro" id="IPR005732">
    <property type="entry name" value="Ribosomal_uS19_bac-type"/>
</dbReference>
<dbReference type="InterPro" id="IPR020934">
    <property type="entry name" value="Ribosomal_uS19_CS"/>
</dbReference>
<dbReference type="InterPro" id="IPR023575">
    <property type="entry name" value="Ribosomal_uS19_SF"/>
</dbReference>
<dbReference type="NCBIfam" id="TIGR01050">
    <property type="entry name" value="rpsS_bact"/>
    <property type="match status" value="1"/>
</dbReference>
<dbReference type="PANTHER" id="PTHR11880">
    <property type="entry name" value="RIBOSOMAL PROTEIN S19P FAMILY MEMBER"/>
    <property type="match status" value="1"/>
</dbReference>
<dbReference type="PANTHER" id="PTHR11880:SF8">
    <property type="entry name" value="SMALL RIBOSOMAL SUBUNIT PROTEIN US19M"/>
    <property type="match status" value="1"/>
</dbReference>
<dbReference type="Pfam" id="PF00203">
    <property type="entry name" value="Ribosomal_S19"/>
    <property type="match status" value="1"/>
</dbReference>
<dbReference type="PIRSF" id="PIRSF002144">
    <property type="entry name" value="Ribosomal_S19"/>
    <property type="match status" value="1"/>
</dbReference>
<dbReference type="PRINTS" id="PR00975">
    <property type="entry name" value="RIBOSOMALS19"/>
</dbReference>
<dbReference type="SUPFAM" id="SSF54570">
    <property type="entry name" value="Ribosomal protein S19"/>
    <property type="match status" value="1"/>
</dbReference>
<dbReference type="PROSITE" id="PS00323">
    <property type="entry name" value="RIBOSOMAL_S19"/>
    <property type="match status" value="1"/>
</dbReference>
<keyword id="KW-0687">Ribonucleoprotein</keyword>
<keyword id="KW-0689">Ribosomal protein</keyword>
<keyword id="KW-0694">RNA-binding</keyword>
<keyword id="KW-0699">rRNA-binding</keyword>